<proteinExistence type="inferred from homology"/>
<accession>Q63EL0</accession>
<comment type="subcellular location">
    <subcellularLocation>
        <location evidence="1">Cell membrane</location>
        <topology evidence="1">Multi-pass membrane protein</topology>
    </subcellularLocation>
</comment>
<comment type="similarity">
    <text evidence="1">Belongs to the UPF0344 family.</text>
</comment>
<dbReference type="EMBL" id="CP000001">
    <property type="protein sequence ID" value="AAU19195.1"/>
    <property type="molecule type" value="Genomic_DNA"/>
</dbReference>
<dbReference type="RefSeq" id="WP_000233503.1">
    <property type="nucleotide sequence ID" value="NZ_CP009968.1"/>
</dbReference>
<dbReference type="SMR" id="Q63EL0"/>
<dbReference type="KEGG" id="bcz:BCE33L1051"/>
<dbReference type="PATRIC" id="fig|288681.22.peg.4515"/>
<dbReference type="Proteomes" id="UP000002612">
    <property type="component" value="Chromosome"/>
</dbReference>
<dbReference type="GO" id="GO:0005886">
    <property type="term" value="C:plasma membrane"/>
    <property type="evidence" value="ECO:0007669"/>
    <property type="project" value="UniProtKB-SubCell"/>
</dbReference>
<dbReference type="HAMAP" id="MF_01536">
    <property type="entry name" value="UPF0344"/>
    <property type="match status" value="1"/>
</dbReference>
<dbReference type="InterPro" id="IPR010899">
    <property type="entry name" value="UPF0344"/>
</dbReference>
<dbReference type="NCBIfam" id="NF010194">
    <property type="entry name" value="PRK13673.1-1"/>
    <property type="match status" value="1"/>
</dbReference>
<dbReference type="Pfam" id="PF07457">
    <property type="entry name" value="DUF1516"/>
    <property type="match status" value="1"/>
</dbReference>
<gene>
    <name type="ordered locus">BCE33L1051</name>
</gene>
<organism>
    <name type="scientific">Bacillus cereus (strain ZK / E33L)</name>
    <dbReference type="NCBI Taxonomy" id="288681"/>
    <lineage>
        <taxon>Bacteria</taxon>
        <taxon>Bacillati</taxon>
        <taxon>Bacillota</taxon>
        <taxon>Bacilli</taxon>
        <taxon>Bacillales</taxon>
        <taxon>Bacillaceae</taxon>
        <taxon>Bacillus</taxon>
        <taxon>Bacillus cereus group</taxon>
    </lineage>
</organism>
<protein>
    <recommendedName>
        <fullName evidence="1">UPF0344 protein BCE33L1051</fullName>
    </recommendedName>
</protein>
<sequence>MVHMHITAWALGLILFFVAYSLYSAGRKGKGVHMGLRLMYIIIIVTGVWLYLDQTIVDKSYHMWYGLKMLAGILVIAGMEMVLVKMSKNKATGAFWGLFIIALVAVFYLGLKLPIGWQVF</sequence>
<name>Y1051_BACCZ</name>
<feature type="chain" id="PRO_0000105881" description="UPF0344 protein BCE33L1051">
    <location>
        <begin position="1"/>
        <end position="120"/>
    </location>
</feature>
<feature type="transmembrane region" description="Helical" evidence="1">
    <location>
        <begin position="6"/>
        <end position="26"/>
    </location>
</feature>
<feature type="transmembrane region" description="Helical" evidence="1">
    <location>
        <begin position="32"/>
        <end position="52"/>
    </location>
</feature>
<feature type="transmembrane region" description="Helical" evidence="1">
    <location>
        <begin position="64"/>
        <end position="84"/>
    </location>
</feature>
<feature type="transmembrane region" description="Helical" evidence="1">
    <location>
        <begin position="91"/>
        <end position="111"/>
    </location>
</feature>
<keyword id="KW-1003">Cell membrane</keyword>
<keyword id="KW-0472">Membrane</keyword>
<keyword id="KW-0812">Transmembrane</keyword>
<keyword id="KW-1133">Transmembrane helix</keyword>
<reference key="1">
    <citation type="journal article" date="2006" name="J. Bacteriol.">
        <title>Pathogenomic sequence analysis of Bacillus cereus and Bacillus thuringiensis isolates closely related to Bacillus anthracis.</title>
        <authorList>
            <person name="Han C.S."/>
            <person name="Xie G."/>
            <person name="Challacombe J.F."/>
            <person name="Altherr M.R."/>
            <person name="Bhotika S.S."/>
            <person name="Bruce D."/>
            <person name="Campbell C.S."/>
            <person name="Campbell M.L."/>
            <person name="Chen J."/>
            <person name="Chertkov O."/>
            <person name="Cleland C."/>
            <person name="Dimitrijevic M."/>
            <person name="Doggett N.A."/>
            <person name="Fawcett J.J."/>
            <person name="Glavina T."/>
            <person name="Goodwin L.A."/>
            <person name="Hill K.K."/>
            <person name="Hitchcock P."/>
            <person name="Jackson P.J."/>
            <person name="Keim P."/>
            <person name="Kewalramani A.R."/>
            <person name="Longmire J."/>
            <person name="Lucas S."/>
            <person name="Malfatti S."/>
            <person name="McMurry K."/>
            <person name="Meincke L.J."/>
            <person name="Misra M."/>
            <person name="Moseman B.L."/>
            <person name="Mundt M."/>
            <person name="Munk A.C."/>
            <person name="Okinaka R.T."/>
            <person name="Parson-Quintana B."/>
            <person name="Reilly L.P."/>
            <person name="Richardson P."/>
            <person name="Robinson D.L."/>
            <person name="Rubin E."/>
            <person name="Saunders E."/>
            <person name="Tapia R."/>
            <person name="Tesmer J.G."/>
            <person name="Thayer N."/>
            <person name="Thompson L.S."/>
            <person name="Tice H."/>
            <person name="Ticknor L.O."/>
            <person name="Wills P.L."/>
            <person name="Brettin T.S."/>
            <person name="Gilna P."/>
        </authorList>
    </citation>
    <scope>NUCLEOTIDE SEQUENCE [LARGE SCALE GENOMIC DNA]</scope>
    <source>
        <strain>ZK / E33L</strain>
    </source>
</reference>
<evidence type="ECO:0000255" key="1">
    <source>
        <dbReference type="HAMAP-Rule" id="MF_01536"/>
    </source>
</evidence>